<reference key="1">
    <citation type="journal article" date="2003" name="Proc. Natl. Acad. Sci. U.S.A.">
        <title>The complete genome sequence of Mycobacterium bovis.</title>
        <authorList>
            <person name="Garnier T."/>
            <person name="Eiglmeier K."/>
            <person name="Camus J.-C."/>
            <person name="Medina N."/>
            <person name="Mansoor H."/>
            <person name="Pryor M."/>
            <person name="Duthoy S."/>
            <person name="Grondin S."/>
            <person name="Lacroix C."/>
            <person name="Monsempe C."/>
            <person name="Simon S."/>
            <person name="Harris B."/>
            <person name="Atkin R."/>
            <person name="Doggett J."/>
            <person name="Mayes R."/>
            <person name="Keating L."/>
            <person name="Wheeler P.R."/>
            <person name="Parkhill J."/>
            <person name="Barrell B.G."/>
            <person name="Cole S.T."/>
            <person name="Gordon S.V."/>
            <person name="Hewinson R.G."/>
        </authorList>
    </citation>
    <scope>NUCLEOTIDE SEQUENCE [LARGE SCALE GENOMIC DNA]</scope>
    <source>
        <strain>ATCC BAA-935 / AF2122/97</strain>
    </source>
</reference>
<reference key="2">
    <citation type="journal article" date="2017" name="Genome Announc.">
        <title>Updated reference genome sequence and annotation of Mycobacterium bovis AF2122/97.</title>
        <authorList>
            <person name="Malone K.M."/>
            <person name="Farrell D."/>
            <person name="Stuber T.P."/>
            <person name="Schubert O.T."/>
            <person name="Aebersold R."/>
            <person name="Robbe-Austerman S."/>
            <person name="Gordon S.V."/>
        </authorList>
    </citation>
    <scope>NUCLEOTIDE SEQUENCE [LARGE SCALE GENOMIC DNA]</scope>
    <scope>GENOME REANNOTATION</scope>
    <source>
        <strain>ATCC BAA-935 / AF2122/97</strain>
    </source>
</reference>
<protein>
    <recommendedName>
        <fullName>Copper transporter MctB</fullName>
    </recommendedName>
</protein>
<organism>
    <name type="scientific">Mycobacterium bovis (strain ATCC BAA-935 / AF2122/97)</name>
    <dbReference type="NCBI Taxonomy" id="233413"/>
    <lineage>
        <taxon>Bacteria</taxon>
        <taxon>Bacillati</taxon>
        <taxon>Actinomycetota</taxon>
        <taxon>Actinomycetes</taxon>
        <taxon>Mycobacteriales</taxon>
        <taxon>Mycobacteriaceae</taxon>
        <taxon>Mycobacterium</taxon>
        <taxon>Mycobacterium tuberculosis complex</taxon>
    </lineage>
</organism>
<feature type="signal peptide" evidence="2">
    <location>
        <begin position="1"/>
        <end position="30"/>
    </location>
</feature>
<feature type="chain" id="PRO_0000014106" description="Copper transporter MctB">
    <location>
        <begin position="31"/>
        <end position="314"/>
    </location>
</feature>
<sequence length="314" mass="32391">MISLRQHAVSLAAVFLALAMGVVLGSGFFSDTLLSSLRSEKRDLYTQIDRLTDQRDALREKLSAADNFDIQVGSRIVHDALVGKSVVIFRTPDAHDDDIAAVSKIVGQAGGAVTATVSLTQEFVEANSAEKLRSVVNSSILPAGSQLSTKLVDQGSQAGDLLGIALLSNADPAAPTVEQAQRDTVLAALRETGFITYQPRDRIGTANATVVVTGGALSTDAGNQGVSVARFAAALAPRGSGTLLAGRDGSANRPAAVAVTRADADMAAEISTVDDIDAEPGRITVILALHDLINGGHVGHYGTGHGAMSVTVSQ</sequence>
<evidence type="ECO:0000250" key="1"/>
<evidence type="ECO:0000255" key="2"/>
<evidence type="ECO:0000305" key="3"/>
<accession>P64884</accession>
<accession>A0A1R3XZ43</accession>
<accession>P58212</accession>
<accession>X2BIW3</accession>
<comment type="function">
    <text evidence="1">Pore-forming protein, which is involved in efflux of copper across the outer membrane. Essential for copper resistance and maintenance of a low intracellular copper concentration (By similarity).</text>
</comment>
<comment type="subcellular location">
    <subcellularLocation>
        <location evidence="1">Cell outer membrane</location>
    </subcellularLocation>
</comment>
<comment type="similarity">
    <text evidence="3">Belongs to the MctB (TC 1.B.50) family.</text>
</comment>
<keyword id="KW-0998">Cell outer membrane</keyword>
<keyword id="KW-0186">Copper</keyword>
<keyword id="KW-0406">Ion transport</keyword>
<keyword id="KW-0472">Membrane</keyword>
<keyword id="KW-0626">Porin</keyword>
<keyword id="KW-1185">Reference proteome</keyword>
<keyword id="KW-0732">Signal</keyword>
<keyword id="KW-0812">Transmembrane</keyword>
<keyword id="KW-0813">Transport</keyword>
<name>MCTB_MYCBO</name>
<proteinExistence type="inferred from homology"/>
<gene>
    <name type="primary">mctB</name>
    <name type="ordered locus">BQ2027_MB1724</name>
</gene>
<dbReference type="EMBL" id="LT708304">
    <property type="protein sequence ID" value="SIU00328.1"/>
    <property type="molecule type" value="Genomic_DNA"/>
</dbReference>
<dbReference type="RefSeq" id="NP_855377.1">
    <property type="nucleotide sequence ID" value="NC_002945.3"/>
</dbReference>
<dbReference type="RefSeq" id="WP_003408390.1">
    <property type="nucleotide sequence ID" value="NC_002945.4"/>
</dbReference>
<dbReference type="SMR" id="P64884"/>
<dbReference type="KEGG" id="mbo:BQ2027_MB1724"/>
<dbReference type="PATRIC" id="fig|233413.5.peg.1880"/>
<dbReference type="Proteomes" id="UP000001419">
    <property type="component" value="Chromosome"/>
</dbReference>
<dbReference type="GO" id="GO:0009279">
    <property type="term" value="C:cell outer membrane"/>
    <property type="evidence" value="ECO:0007669"/>
    <property type="project" value="UniProtKB-SubCell"/>
</dbReference>
<dbReference type="GO" id="GO:0046930">
    <property type="term" value="C:pore complex"/>
    <property type="evidence" value="ECO:0007669"/>
    <property type="project" value="UniProtKB-KW"/>
</dbReference>
<dbReference type="GO" id="GO:0015288">
    <property type="term" value="F:porin activity"/>
    <property type="evidence" value="ECO:0007669"/>
    <property type="project" value="UniProtKB-KW"/>
</dbReference>
<dbReference type="GO" id="GO:0055070">
    <property type="term" value="P:copper ion homeostasis"/>
    <property type="evidence" value="ECO:0007669"/>
    <property type="project" value="InterPro"/>
</dbReference>
<dbReference type="GO" id="GO:0006811">
    <property type="term" value="P:monoatomic ion transport"/>
    <property type="evidence" value="ECO:0007669"/>
    <property type="project" value="UniProtKB-KW"/>
</dbReference>
<dbReference type="InterPro" id="IPR021522">
    <property type="entry name" value="MctB"/>
</dbReference>
<dbReference type="Pfam" id="PF11382">
    <property type="entry name" value="MctB"/>
    <property type="match status" value="1"/>
</dbReference>